<feature type="chain" id="PRO_0000260393" description="Ankyrin repeat, SAM and basic leucine zipper domain-containing protein 1">
    <location>
        <begin position="1"/>
        <end position="475"/>
    </location>
</feature>
<feature type="repeat" description="ANK 1">
    <location>
        <begin position="45"/>
        <end position="74"/>
    </location>
</feature>
<feature type="repeat" description="ANK 2">
    <location>
        <begin position="78"/>
        <end position="107"/>
    </location>
</feature>
<feature type="repeat" description="ANK 3">
    <location>
        <begin position="110"/>
        <end position="144"/>
    </location>
</feature>
<feature type="repeat" description="ANK 4">
    <location>
        <begin position="148"/>
        <end position="177"/>
    </location>
</feature>
<feature type="repeat" description="ANK 5">
    <location>
        <begin position="181"/>
        <end position="210"/>
    </location>
</feature>
<feature type="repeat" description="ANK 6">
    <location>
        <begin position="214"/>
        <end position="243"/>
    </location>
</feature>
<feature type="domain" description="SAM">
    <location>
        <begin position="272"/>
        <end position="334"/>
    </location>
</feature>
<feature type="modified residue" description="Phosphoserine" evidence="2">
    <location>
        <position position="17"/>
    </location>
</feature>
<feature type="modified residue" description="Phosphoserine" evidence="2">
    <location>
        <position position="18"/>
    </location>
</feature>
<feature type="modified residue" description="Phosphoserine" evidence="2">
    <location>
        <position position="20"/>
    </location>
</feature>
<proteinExistence type="inferred from homology"/>
<dbReference type="EMBL" id="DP000183">
    <property type="protein sequence ID" value="ABI93659.1"/>
    <property type="molecule type" value="Genomic_DNA"/>
</dbReference>
<dbReference type="RefSeq" id="XP_004741964.2">
    <property type="nucleotide sequence ID" value="XM_004741907.3"/>
</dbReference>
<dbReference type="SMR" id="Q07E17"/>
<dbReference type="STRING" id="9669.ENSMPUP00000007098"/>
<dbReference type="GeneID" id="101673124"/>
<dbReference type="eggNOG" id="KOG0504">
    <property type="taxonomic scope" value="Eukaryota"/>
</dbReference>
<dbReference type="InParanoid" id="Q07E17"/>
<dbReference type="OrthoDB" id="439236at2759"/>
<dbReference type="Proteomes" id="UP000000715">
    <property type="component" value="Unplaced"/>
</dbReference>
<dbReference type="GO" id="GO:0071546">
    <property type="term" value="C:pi-body"/>
    <property type="evidence" value="ECO:0000250"/>
    <property type="project" value="UniProtKB"/>
</dbReference>
<dbReference type="GO" id="GO:0030154">
    <property type="term" value="P:cell differentiation"/>
    <property type="evidence" value="ECO:0007669"/>
    <property type="project" value="UniProtKB-KW"/>
</dbReference>
<dbReference type="GO" id="GO:0007140">
    <property type="term" value="P:male meiotic nuclear division"/>
    <property type="evidence" value="ECO:0000250"/>
    <property type="project" value="UniProtKB"/>
</dbReference>
<dbReference type="GO" id="GO:0031047">
    <property type="term" value="P:regulatory ncRNA-mediated gene silencing"/>
    <property type="evidence" value="ECO:0007669"/>
    <property type="project" value="UniProtKB-KW"/>
</dbReference>
<dbReference type="GO" id="GO:0007283">
    <property type="term" value="P:spermatogenesis"/>
    <property type="evidence" value="ECO:0000250"/>
    <property type="project" value="UniProtKB"/>
</dbReference>
<dbReference type="GO" id="GO:0010526">
    <property type="term" value="P:transposable element silencing"/>
    <property type="evidence" value="ECO:0000250"/>
    <property type="project" value="UniProtKB"/>
</dbReference>
<dbReference type="CDD" id="cd09521">
    <property type="entry name" value="SAM_ASZ1"/>
    <property type="match status" value="1"/>
</dbReference>
<dbReference type="FunFam" id="1.25.40.20:FF:000192">
    <property type="entry name" value="Ankyrin repeat, SAM and basic leucine zipper domain-containing 1"/>
    <property type="match status" value="1"/>
</dbReference>
<dbReference type="FunFam" id="1.10.150.50:FF:000060">
    <property type="entry name" value="Ankyrin repeat, SAM and basic leucine zipper domain-containing protein 1"/>
    <property type="match status" value="1"/>
</dbReference>
<dbReference type="Gene3D" id="1.25.40.20">
    <property type="entry name" value="Ankyrin repeat-containing domain"/>
    <property type="match status" value="2"/>
</dbReference>
<dbReference type="Gene3D" id="1.10.150.50">
    <property type="entry name" value="Transcription Factor, Ets-1"/>
    <property type="match status" value="1"/>
</dbReference>
<dbReference type="InterPro" id="IPR002110">
    <property type="entry name" value="Ankyrin_rpt"/>
</dbReference>
<dbReference type="InterPro" id="IPR036770">
    <property type="entry name" value="Ankyrin_rpt-contain_sf"/>
</dbReference>
<dbReference type="InterPro" id="IPR042650">
    <property type="entry name" value="Asz1_SAM"/>
</dbReference>
<dbReference type="InterPro" id="IPR001660">
    <property type="entry name" value="SAM"/>
</dbReference>
<dbReference type="InterPro" id="IPR013761">
    <property type="entry name" value="SAM/pointed_sf"/>
</dbReference>
<dbReference type="PANTHER" id="PTHR24157">
    <property type="entry name" value="ANKYRIN REPEAT, SAM AND BASIC LEUCINE ZIPPER DOMAIN-CONTAINING PROTEIN 1"/>
    <property type="match status" value="1"/>
</dbReference>
<dbReference type="PANTHER" id="PTHR24157:SF3">
    <property type="entry name" value="ANKYRIN REPEAT, SAM AND BASIC LEUCINE ZIPPER DOMAIN-CONTAINING PROTEIN 1"/>
    <property type="match status" value="1"/>
</dbReference>
<dbReference type="Pfam" id="PF00023">
    <property type="entry name" value="Ank"/>
    <property type="match status" value="1"/>
</dbReference>
<dbReference type="Pfam" id="PF12796">
    <property type="entry name" value="Ank_2"/>
    <property type="match status" value="1"/>
</dbReference>
<dbReference type="Pfam" id="PF07647">
    <property type="entry name" value="SAM_2"/>
    <property type="match status" value="1"/>
</dbReference>
<dbReference type="PRINTS" id="PR01415">
    <property type="entry name" value="ANKYRIN"/>
</dbReference>
<dbReference type="SMART" id="SM00248">
    <property type="entry name" value="ANK"/>
    <property type="match status" value="5"/>
</dbReference>
<dbReference type="SUPFAM" id="SSF48403">
    <property type="entry name" value="Ankyrin repeat"/>
    <property type="match status" value="1"/>
</dbReference>
<dbReference type="SUPFAM" id="SSF140860">
    <property type="entry name" value="Pseudo ankyrin repeat-like"/>
    <property type="match status" value="1"/>
</dbReference>
<dbReference type="SUPFAM" id="SSF47769">
    <property type="entry name" value="SAM/Pointed domain"/>
    <property type="match status" value="1"/>
</dbReference>
<dbReference type="PROSITE" id="PS50297">
    <property type="entry name" value="ANK_REP_REGION"/>
    <property type="match status" value="1"/>
</dbReference>
<dbReference type="PROSITE" id="PS50088">
    <property type="entry name" value="ANK_REPEAT"/>
    <property type="match status" value="3"/>
</dbReference>
<name>ASZ1_MUSPF</name>
<accession>Q07E17</accession>
<sequence length="475" mass="53038">MATCTLRGLAVAGGGESSESEDDGWEIGYLDRAVQKLKGPLLPEEKNETFKKALTTGDISLVQELLDSGISVESSFRYGWTPLMYAASVSNVELVRVLLDRGANASFDKDKQTILITACSARGSEEQILKCVELLLSRNADPNVACRRLMTPIMYAARDGHPQVVALLVAHGAEVNSQDENGYTALTWAARQGHKNVVLKLLELGANKMLQTKDGKTPSEIAKRNKHLEIFNFLSLTLNPLEGKLQQLTKEETICKLLTTDSDKENDHLFSSYTAFGDLEIFLHGLGLEHMTDLLKERDITLRHLLTMRKDEFTKNGITSRDQQKILAALKELEVEEIKFGELPEVAKLEISGDEFLNFLLKLNKQCGHLITAVQNIITELPVNSHKIVLEWASPRNFTSVCEELVSNVEDLSKEVCKLKDLIQKLQNERENDPTHIPLMEEVSTWNSKILKRTAIAVCGVGLLLFVCKLTLQRK</sequence>
<reference key="1">
    <citation type="submission" date="2006-09" db="EMBL/GenBank/DDBJ databases">
        <title>NISC comparative sequencing initiative.</title>
        <authorList>
            <person name="Antonellis A."/>
            <person name="Ayele K."/>
            <person name="Benjamin B."/>
            <person name="Blakesley R.W."/>
            <person name="Boakye A."/>
            <person name="Bouffard G.G."/>
            <person name="Brinkley C."/>
            <person name="Brooks S."/>
            <person name="Chu G."/>
            <person name="Coleman H."/>
            <person name="Engle J."/>
            <person name="Gestole M."/>
            <person name="Greene A."/>
            <person name="Guan X."/>
            <person name="Gupta J."/>
            <person name="Haghighi P."/>
            <person name="Han J."/>
            <person name="Hansen N."/>
            <person name="Ho S.-L."/>
            <person name="Hu P."/>
            <person name="Hunter G."/>
            <person name="Hurle B."/>
            <person name="Idol J.R."/>
            <person name="Kwong P."/>
            <person name="Laric P."/>
            <person name="Larson S."/>
            <person name="Lee-Lin S.-Q."/>
            <person name="Legaspi R."/>
            <person name="Madden M."/>
            <person name="Maduro Q.L."/>
            <person name="Maduro V.B."/>
            <person name="Margulies E.H."/>
            <person name="Masiello C."/>
            <person name="Maskeri B."/>
            <person name="McDowell J."/>
            <person name="Mojidi H.A."/>
            <person name="Mullikin J.C."/>
            <person name="Oestreicher J.S."/>
            <person name="Park M."/>
            <person name="Portnoy M.E."/>
            <person name="Prasad A."/>
            <person name="Puri O."/>
            <person name="Reddix-Dugue N."/>
            <person name="Schandler K."/>
            <person name="Schueler M.G."/>
            <person name="Sison C."/>
            <person name="Stantripop S."/>
            <person name="Stephen E."/>
            <person name="Taye A."/>
            <person name="Thomas J.W."/>
            <person name="Thomas P.J."/>
            <person name="Tsipouri V."/>
            <person name="Ung L."/>
            <person name="Vogt J.L."/>
            <person name="Wetherby K.D."/>
            <person name="Young A."/>
            <person name="Green E.D."/>
        </authorList>
    </citation>
    <scope>NUCLEOTIDE SEQUENCE [LARGE SCALE GENOMIC DNA]</scope>
</reference>
<gene>
    <name type="primary">ASZ1</name>
    <name type="synonym">GASZ</name>
</gene>
<evidence type="ECO:0000250" key="1"/>
<evidence type="ECO:0000250" key="2">
    <source>
        <dbReference type="UniProtKB" id="Q8VD46"/>
    </source>
</evidence>
<comment type="function">
    <text evidence="1">Plays a central role during spermatogenesis by repressing transposable elements and preventing their mobilization, which is essential for the germline integrity. Acts via the piRNA metabolic process, which mediates the repression of transposable elements during meiosis by forming complexes composed of piRNAs and Piwi proteins and governs the methylation and subsequent repression of transposons. Its association with pi-bodies suggests a participation in the primary piRNAs metabolic process. Required prior to the pachytene stage to facilitate the production of multiple types of piRNAs, including those associated with repeats involved in the regulation of retrotransposons. May act by mediating protein-protein interactions during germ cell maturation (By similarity).</text>
</comment>
<comment type="subunit">
    <text evidence="1">Interacts with DDX4, PIWIL1, RANBP9 and TDRD1.</text>
</comment>
<comment type="subcellular location">
    <subcellularLocation>
        <location evidence="1">Cytoplasm</location>
    </subcellularLocation>
    <text evidence="1">Component of the meiotic nuage, also named P granule, a germ-cell-specific organelle required to repress transposon activity during meiosis. Specifically localizes to pi-bodies, a subset of the nuage which contains primary piRNAs (By similarity).</text>
</comment>
<protein>
    <recommendedName>
        <fullName>Ankyrin repeat, SAM and basic leucine zipper domain-containing protein 1</fullName>
    </recommendedName>
    <alternativeName>
        <fullName>Germ cell-specific ankyrin, SAM and basic leucine zipper domain-containing protein</fullName>
    </alternativeName>
</protein>
<keyword id="KW-0040">ANK repeat</keyword>
<keyword id="KW-0963">Cytoplasm</keyword>
<keyword id="KW-0217">Developmental protein</keyword>
<keyword id="KW-0221">Differentiation</keyword>
<keyword id="KW-0469">Meiosis</keyword>
<keyword id="KW-0597">Phosphoprotein</keyword>
<keyword id="KW-1185">Reference proteome</keyword>
<keyword id="KW-0677">Repeat</keyword>
<keyword id="KW-0943">RNA-mediated gene silencing</keyword>
<keyword id="KW-0744">Spermatogenesis</keyword>
<organism>
    <name type="scientific">Mustela putorius furo</name>
    <name type="common">European domestic ferret</name>
    <name type="synonym">Mustela furo</name>
    <dbReference type="NCBI Taxonomy" id="9669"/>
    <lineage>
        <taxon>Eukaryota</taxon>
        <taxon>Metazoa</taxon>
        <taxon>Chordata</taxon>
        <taxon>Craniata</taxon>
        <taxon>Vertebrata</taxon>
        <taxon>Euteleostomi</taxon>
        <taxon>Mammalia</taxon>
        <taxon>Eutheria</taxon>
        <taxon>Laurasiatheria</taxon>
        <taxon>Carnivora</taxon>
        <taxon>Caniformia</taxon>
        <taxon>Musteloidea</taxon>
        <taxon>Mustelidae</taxon>
        <taxon>Mustelinae</taxon>
        <taxon>Mustela</taxon>
    </lineage>
</organism>